<keyword id="KW-0963">Cytoplasm</keyword>
<keyword id="KW-0521">NADP</keyword>
<keyword id="KW-0560">Oxidoreductase</keyword>
<keyword id="KW-0671">Queuosine biosynthesis</keyword>
<sequence>MNPEHSPLGKATVYANQYDASLLFPIPRAGAREQIGIGAPLPFFGTDIWNAYELSWLNARGKPQIAIATFYVPAESPNIVESKSFKLYLGSFAQTAFESADAVRDALKRDVSAACGASVTVRLATPAEFRKLQMDELDGLSLDRLDLDAHVYETDPSFLTASHDEAPVEETLVTDLLKSNCPVTGQPDWGSVQIHYVGAPIDHAGLLRYIISFRNHTGFHEQCVERIFVDILRACQPVKLAVYARYTRRGGLDINPFRTNYNQPMPDNARTARQ</sequence>
<proteinExistence type="inferred from homology"/>
<organism>
    <name type="scientific">Burkholderia pseudomallei (strain 668)</name>
    <dbReference type="NCBI Taxonomy" id="320373"/>
    <lineage>
        <taxon>Bacteria</taxon>
        <taxon>Pseudomonadati</taxon>
        <taxon>Pseudomonadota</taxon>
        <taxon>Betaproteobacteria</taxon>
        <taxon>Burkholderiales</taxon>
        <taxon>Burkholderiaceae</taxon>
        <taxon>Burkholderia</taxon>
        <taxon>pseudomallei group</taxon>
    </lineage>
</organism>
<reference key="1">
    <citation type="journal article" date="2010" name="Genome Biol. Evol.">
        <title>Continuing evolution of Burkholderia mallei through genome reduction and large-scale rearrangements.</title>
        <authorList>
            <person name="Losada L."/>
            <person name="Ronning C.M."/>
            <person name="DeShazer D."/>
            <person name="Woods D."/>
            <person name="Fedorova N."/>
            <person name="Kim H.S."/>
            <person name="Shabalina S.A."/>
            <person name="Pearson T.R."/>
            <person name="Brinkac L."/>
            <person name="Tan P."/>
            <person name="Nandi T."/>
            <person name="Crabtree J."/>
            <person name="Badger J."/>
            <person name="Beckstrom-Sternberg S."/>
            <person name="Saqib M."/>
            <person name="Schutzer S.E."/>
            <person name="Keim P."/>
            <person name="Nierman W.C."/>
        </authorList>
    </citation>
    <scope>NUCLEOTIDE SEQUENCE [LARGE SCALE GENOMIC DNA]</scope>
    <source>
        <strain>668</strain>
    </source>
</reference>
<evidence type="ECO:0000255" key="1">
    <source>
        <dbReference type="HAMAP-Rule" id="MF_00817"/>
    </source>
</evidence>
<gene>
    <name evidence="1" type="primary">queF</name>
    <name type="ordered locus">BURPS668_0661</name>
</gene>
<accession>A3N5U2</accession>
<protein>
    <recommendedName>
        <fullName evidence="1">NADPH-dependent 7-cyano-7-deazaguanine reductase</fullName>
        <ecNumber evidence="1">1.7.1.13</ecNumber>
    </recommendedName>
    <alternativeName>
        <fullName evidence="1">7-cyano-7-carbaguanine reductase</fullName>
    </alternativeName>
    <alternativeName>
        <fullName evidence="1">NADPH-dependent nitrile oxidoreductase</fullName>
    </alternativeName>
    <alternativeName>
        <fullName evidence="1">PreQ(0) reductase</fullName>
    </alternativeName>
</protein>
<dbReference type="EC" id="1.7.1.13" evidence="1"/>
<dbReference type="EMBL" id="CP000570">
    <property type="protein sequence ID" value="ABN83377.1"/>
    <property type="molecule type" value="Genomic_DNA"/>
</dbReference>
<dbReference type="RefSeq" id="WP_004189061.1">
    <property type="nucleotide sequence ID" value="NC_009074.1"/>
</dbReference>
<dbReference type="SMR" id="A3N5U2"/>
<dbReference type="GeneID" id="92977957"/>
<dbReference type="KEGG" id="bpd:BURPS668_0661"/>
<dbReference type="HOGENOM" id="CLU_054738_0_0_4"/>
<dbReference type="UniPathway" id="UPA00392"/>
<dbReference type="GO" id="GO:0005737">
    <property type="term" value="C:cytoplasm"/>
    <property type="evidence" value="ECO:0007669"/>
    <property type="project" value="UniProtKB-SubCell"/>
</dbReference>
<dbReference type="GO" id="GO:0033739">
    <property type="term" value="F:preQ1 synthase activity"/>
    <property type="evidence" value="ECO:0007669"/>
    <property type="project" value="UniProtKB-UniRule"/>
</dbReference>
<dbReference type="GO" id="GO:0008616">
    <property type="term" value="P:queuosine biosynthetic process"/>
    <property type="evidence" value="ECO:0007669"/>
    <property type="project" value="UniProtKB-UniRule"/>
</dbReference>
<dbReference type="GO" id="GO:0006400">
    <property type="term" value="P:tRNA modification"/>
    <property type="evidence" value="ECO:0007669"/>
    <property type="project" value="UniProtKB-UniRule"/>
</dbReference>
<dbReference type="Gene3D" id="3.30.1130.10">
    <property type="match status" value="2"/>
</dbReference>
<dbReference type="HAMAP" id="MF_00817">
    <property type="entry name" value="QueF_type2"/>
    <property type="match status" value="1"/>
</dbReference>
<dbReference type="InterPro" id="IPR043133">
    <property type="entry name" value="GTP-CH-I_C/QueF"/>
</dbReference>
<dbReference type="InterPro" id="IPR050084">
    <property type="entry name" value="NADPH_dep_7-cyano-7-deazaG_red"/>
</dbReference>
<dbReference type="InterPro" id="IPR029500">
    <property type="entry name" value="QueF"/>
</dbReference>
<dbReference type="InterPro" id="IPR029139">
    <property type="entry name" value="QueF_N"/>
</dbReference>
<dbReference type="InterPro" id="IPR016428">
    <property type="entry name" value="QueF_type2"/>
</dbReference>
<dbReference type="NCBIfam" id="TIGR03138">
    <property type="entry name" value="QueF"/>
    <property type="match status" value="1"/>
</dbReference>
<dbReference type="PANTHER" id="PTHR34354">
    <property type="entry name" value="NADPH-DEPENDENT 7-CYANO-7-DEAZAGUANINE REDUCTASE"/>
    <property type="match status" value="1"/>
</dbReference>
<dbReference type="PANTHER" id="PTHR34354:SF1">
    <property type="entry name" value="NADPH-DEPENDENT 7-CYANO-7-DEAZAGUANINE REDUCTASE"/>
    <property type="match status" value="1"/>
</dbReference>
<dbReference type="Pfam" id="PF14489">
    <property type="entry name" value="QueF"/>
    <property type="match status" value="1"/>
</dbReference>
<dbReference type="Pfam" id="PF14819">
    <property type="entry name" value="QueF_N"/>
    <property type="match status" value="1"/>
</dbReference>
<dbReference type="PIRSF" id="PIRSF004750">
    <property type="entry name" value="Nitrile_oxidored_YqcD_prd"/>
    <property type="match status" value="1"/>
</dbReference>
<dbReference type="SUPFAM" id="SSF55620">
    <property type="entry name" value="Tetrahydrobiopterin biosynthesis enzymes-like"/>
    <property type="match status" value="1"/>
</dbReference>
<name>QUEF_BURP6</name>
<feature type="chain" id="PRO_1000062334" description="NADPH-dependent 7-cyano-7-deazaguanine reductase">
    <location>
        <begin position="1"/>
        <end position="274"/>
    </location>
</feature>
<feature type="active site" description="Thioimide intermediate" evidence="1">
    <location>
        <position position="181"/>
    </location>
</feature>
<feature type="active site" description="Proton donor" evidence="1">
    <location>
        <position position="188"/>
    </location>
</feature>
<feature type="binding site" evidence="1">
    <location>
        <begin position="80"/>
        <end position="82"/>
    </location>
    <ligand>
        <name>substrate</name>
    </ligand>
</feature>
<feature type="binding site" evidence="1">
    <location>
        <begin position="82"/>
        <end position="83"/>
    </location>
    <ligand>
        <name>NADPH</name>
        <dbReference type="ChEBI" id="CHEBI:57783"/>
    </ligand>
</feature>
<feature type="binding site" evidence="1">
    <location>
        <begin position="220"/>
        <end position="221"/>
    </location>
    <ligand>
        <name>substrate</name>
    </ligand>
</feature>
<feature type="binding site" evidence="1">
    <location>
        <begin position="249"/>
        <end position="250"/>
    </location>
    <ligand>
        <name>NADPH</name>
        <dbReference type="ChEBI" id="CHEBI:57783"/>
    </ligand>
</feature>
<comment type="function">
    <text evidence="1">Catalyzes the NADPH-dependent reduction of 7-cyano-7-deazaguanine (preQ0) to 7-aminomethyl-7-deazaguanine (preQ1).</text>
</comment>
<comment type="catalytic activity">
    <reaction evidence="1">
        <text>7-aminomethyl-7-carbaguanine + 2 NADP(+) = 7-cyano-7-deazaguanine + 2 NADPH + 3 H(+)</text>
        <dbReference type="Rhea" id="RHEA:13409"/>
        <dbReference type="ChEBI" id="CHEBI:15378"/>
        <dbReference type="ChEBI" id="CHEBI:45075"/>
        <dbReference type="ChEBI" id="CHEBI:57783"/>
        <dbReference type="ChEBI" id="CHEBI:58349"/>
        <dbReference type="ChEBI" id="CHEBI:58703"/>
        <dbReference type="EC" id="1.7.1.13"/>
    </reaction>
</comment>
<comment type="pathway">
    <text evidence="1">tRNA modification; tRNA-queuosine biosynthesis.</text>
</comment>
<comment type="subunit">
    <text evidence="1">Homodimer.</text>
</comment>
<comment type="subcellular location">
    <subcellularLocation>
        <location evidence="1">Cytoplasm</location>
    </subcellularLocation>
</comment>
<comment type="similarity">
    <text evidence="1">Belongs to the GTP cyclohydrolase I family. QueF type 2 subfamily.</text>
</comment>